<evidence type="ECO:0000250" key="1"/>
<evidence type="ECO:0000305" key="2"/>
<reference key="1">
    <citation type="journal article" date="1998" name="Infect. Immun.">
        <title>Molecular analysis of Shiga toxigenic Escherichia coli O111:H-proteins which react with sera from patients with hemolytic-uremic syndrome.</title>
        <authorList>
            <person name="Voss E."/>
            <person name="Paton A.W."/>
            <person name="Manning P.A."/>
            <person name="Paton J.C."/>
        </authorList>
    </citation>
    <scope>NUCLEOTIDE SEQUENCE [GENOMIC DNA]</scope>
</reference>
<feature type="chain" id="PRO_0000216360" description="Tir chaperone">
    <location>
        <begin position="1"/>
        <end position="156"/>
    </location>
</feature>
<accession>O30999</accession>
<organism>
    <name type="scientific">Escherichia coli O111:H-</name>
    <dbReference type="NCBI Taxonomy" id="168927"/>
    <lineage>
        <taxon>Bacteria</taxon>
        <taxon>Pseudomonadati</taxon>
        <taxon>Pseudomonadota</taxon>
        <taxon>Gammaproteobacteria</taxon>
        <taxon>Enterobacterales</taxon>
        <taxon>Enterobacteriaceae</taxon>
        <taxon>Escherichia</taxon>
    </lineage>
</organism>
<gene>
    <name type="primary">cesT</name>
</gene>
<dbReference type="EMBL" id="AF025311">
    <property type="protein sequence ID" value="AAC69246.1"/>
    <property type="molecule type" value="Genomic_DNA"/>
</dbReference>
<dbReference type="RefSeq" id="WP_000098792.1">
    <property type="nucleotide sequence ID" value="NZ_QMIB01000037.1"/>
</dbReference>
<dbReference type="BMRB" id="O30999"/>
<dbReference type="SMR" id="O30999"/>
<dbReference type="OMA" id="TNDEYMM"/>
<dbReference type="GO" id="GO:0005737">
    <property type="term" value="C:cytoplasm"/>
    <property type="evidence" value="ECO:0007669"/>
    <property type="project" value="UniProtKB-SubCell"/>
</dbReference>
<dbReference type="GO" id="GO:0030254">
    <property type="term" value="P:protein secretion by the type III secretion system"/>
    <property type="evidence" value="ECO:0007669"/>
    <property type="project" value="InterPro"/>
</dbReference>
<dbReference type="CDD" id="cd17023">
    <property type="entry name" value="T3SC_IA_CesT-like"/>
    <property type="match status" value="1"/>
</dbReference>
<dbReference type="Gene3D" id="1.10.287.390">
    <property type="match status" value="1"/>
</dbReference>
<dbReference type="Gene3D" id="3.30.1460.10">
    <property type="match status" value="1"/>
</dbReference>
<dbReference type="InterPro" id="IPR010261">
    <property type="entry name" value="Tir_chaperone"/>
</dbReference>
<dbReference type="Pfam" id="PF05932">
    <property type="entry name" value="CesT"/>
    <property type="match status" value="1"/>
</dbReference>
<dbReference type="SUPFAM" id="SSF69635">
    <property type="entry name" value="Type III secretory system chaperone-like"/>
    <property type="match status" value="1"/>
</dbReference>
<proteinExistence type="inferred from homology"/>
<sequence length="156" mass="17680">MSSRSELLLDRFAEKIGVGSISFNENRLCSFAIDEIYYISLSDASDEYMMIYGVCGKFPTDNPNFALEILNANLWFAENGGPYLCYESGAQSLLLALRFPLDDATPEKLENEIEVVVKSMENLYLVLHNQGITLENEHMKIEEISSSDNKHYYAGR</sequence>
<protein>
    <recommendedName>
        <fullName>Tir chaperone</fullName>
    </recommendedName>
</protein>
<name>CEST_ECO11</name>
<keyword id="KW-0143">Chaperone</keyword>
<keyword id="KW-0963">Cytoplasm</keyword>
<keyword id="KW-0843">Virulence</keyword>
<comment type="function">
    <text evidence="1">Chaperone for the type III secretion of Tir. Probably stabilizes the protein, prevents inappropriate protein-proteininteractions and aids in secretion (By similarity).</text>
</comment>
<comment type="subcellular location">
    <subcellularLocation>
        <location evidence="1">Cytoplasm</location>
    </subcellularLocation>
</comment>
<comment type="similarity">
    <text evidence="2">Belongs to the CesT/SycH chaperone family.</text>
</comment>